<reference key="1">
    <citation type="journal article" date="2012" name="Mol. Cell. Biochem.">
        <title>Molecular characterization, expression pattern, and association analysis with carcass traits of the porcine SHIP2 gene.</title>
        <authorList>
            <person name="Xiong Q."/>
            <person name="Chai J."/>
            <person name="Deng C."/>
            <person name="Jiang S."/>
            <person name="Li X."/>
            <person name="Suo X."/>
            <person name="Zhang N."/>
            <person name="Yang Q."/>
            <person name="Liu Y."/>
            <person name="Zheng R."/>
            <person name="Chen M."/>
        </authorList>
    </citation>
    <scope>NUCLEOTIDE SEQUENCE [MRNA]</scope>
    <scope>TISSUE SPECIFICITY</scope>
</reference>
<reference key="2">
    <citation type="submission" date="2009-11" db="EMBL/GenBank/DDBJ databases">
        <authorList>
            <consortium name="Porcine genome sequencing project"/>
        </authorList>
    </citation>
    <scope>NUCLEOTIDE SEQUENCE [LARGE SCALE GENOMIC DNA]</scope>
    <source>
        <strain>Duroc</strain>
    </source>
</reference>
<reference key="3">
    <citation type="journal article" date="2003" name="J. Biol. Chem.">
        <title>SHIP-2 and PTEN are expressed and active in vascular smooth muscle cell nuclei, but only SHIP-2 is associated with nuclear speckles.</title>
        <authorList>
            <person name="Deleris P."/>
            <person name="Bacqueville D."/>
            <person name="Gayral S."/>
            <person name="Carrez L."/>
            <person name="Salles J.P."/>
            <person name="Perret B."/>
            <person name="Breton-Douillon M."/>
        </authorList>
    </citation>
    <scope>CATALYTIC ACTIVITY</scope>
    <scope>SUBCELLULAR LOCATION</scope>
    <scope>FUNCTION</scope>
</reference>
<name>SHIP2_PIG</name>
<feature type="chain" id="PRO_0000447605" description="Phosphatidylinositol 3,4,5-trisphosphate 5-phosphatase 2">
    <location>
        <begin position="1"/>
        <end position="1260"/>
    </location>
</feature>
<feature type="domain" description="SH2" evidence="7">
    <location>
        <begin position="25"/>
        <end position="121"/>
    </location>
</feature>
<feature type="domain" description="SAM" evidence="6">
    <location>
        <begin position="1198"/>
        <end position="1260"/>
    </location>
</feature>
<feature type="region of interest" description="Disordered" evidence="8">
    <location>
        <begin position="126"/>
        <end position="178"/>
    </location>
</feature>
<feature type="region of interest" description="Disordered" evidence="8">
    <location>
        <begin position="899"/>
        <end position="1120"/>
    </location>
</feature>
<feature type="region of interest" description="Disordered" evidence="8">
    <location>
        <begin position="1181"/>
        <end position="1200"/>
    </location>
</feature>
<feature type="short sequence motif" description="SH3-binding" evidence="2">
    <location>
        <begin position="946"/>
        <end position="951"/>
    </location>
</feature>
<feature type="short sequence motif" description="NPXY motif" evidence="2">
    <location>
        <begin position="985"/>
        <end position="988"/>
    </location>
</feature>
<feature type="compositionally biased region" description="Basic and acidic residues" evidence="8">
    <location>
        <begin position="126"/>
        <end position="136"/>
    </location>
</feature>
<feature type="compositionally biased region" description="Pro residues" evidence="8">
    <location>
        <begin position="159"/>
        <end position="171"/>
    </location>
</feature>
<feature type="compositionally biased region" description="Pro residues" evidence="8">
    <location>
        <begin position="940"/>
        <end position="952"/>
    </location>
</feature>
<feature type="compositionally biased region" description="Basic and acidic residues" evidence="8">
    <location>
        <begin position="953"/>
        <end position="967"/>
    </location>
</feature>
<feature type="compositionally biased region" description="Pro residues" evidence="8">
    <location>
        <begin position="998"/>
        <end position="1013"/>
    </location>
</feature>
<feature type="compositionally biased region" description="Pro residues" evidence="8">
    <location>
        <begin position="1050"/>
        <end position="1061"/>
    </location>
</feature>
<feature type="compositionally biased region" description="Pro residues" evidence="8">
    <location>
        <begin position="1090"/>
        <end position="1108"/>
    </location>
</feature>
<feature type="modified residue" description="Phosphoserine" evidence="2">
    <location>
        <position position="136"/>
    </location>
</feature>
<feature type="modified residue" description="Phosphoserine" evidence="2">
    <location>
        <position position="243"/>
    </location>
</feature>
<feature type="modified residue" description="Phosphoserine" evidence="2">
    <location>
        <position position="355"/>
    </location>
</feature>
<feature type="modified residue" description="Phosphotyrosine" evidence="2">
    <location>
        <position position="888"/>
    </location>
</feature>
<feature type="modified residue" description="Phosphoserine" evidence="2">
    <location>
        <position position="892"/>
    </location>
</feature>
<feature type="modified residue" description="Phosphothreonine" evidence="2">
    <location>
        <position position="960"/>
    </location>
</feature>
<feature type="modified residue" description="Phosphotyrosine" evidence="2">
    <location>
        <position position="988"/>
    </location>
</feature>
<feature type="modified residue" description="Phosphoserine" evidence="2">
    <location>
        <position position="1133"/>
    </location>
</feature>
<feature type="modified residue" description="Phosphotyrosine" evidence="2">
    <location>
        <position position="1164"/>
    </location>
</feature>
<feature type="modified residue" description="Phosphoserine" evidence="2">
    <location>
        <position position="1259"/>
    </location>
</feature>
<feature type="sequence conflict" description="In Ref. 1; ADG23056." evidence="11" ref="1">
    <original>G</original>
    <variation>GG</variation>
    <location>
        <position position="11"/>
    </location>
</feature>
<feature type="sequence conflict" description="In Ref. 1; ADG23056." evidence="11" ref="1">
    <original>G</original>
    <variation>GS</variation>
    <location>
        <position position="150"/>
    </location>
</feature>
<feature type="sequence conflict" description="In Ref. 1; ADG23056." evidence="11" ref="1">
    <original>E</original>
    <variation>ET</variation>
    <location>
        <position position="167"/>
    </location>
</feature>
<feature type="sequence conflict" description="In Ref. 1; ADG23056." evidence="11" ref="1">
    <original>L</original>
    <variation>LA</variation>
    <location>
        <position position="813"/>
    </location>
</feature>
<feature type="sequence conflict" description="In Ref. 1; ADG23056." evidence="11" ref="1">
    <original>T</original>
    <variation>N</variation>
    <location>
        <position position="943"/>
    </location>
</feature>
<accession>D7PF45</accession>
<accession>F1SUW7</accession>
<keyword id="KW-1003">Cell membrane</keyword>
<keyword id="KW-0966">Cell projection</keyword>
<keyword id="KW-0963">Cytoplasm</keyword>
<keyword id="KW-0206">Cytoskeleton</keyword>
<keyword id="KW-0378">Hydrolase</keyword>
<keyword id="KW-0391">Immunity</keyword>
<keyword id="KW-0443">Lipid metabolism</keyword>
<keyword id="KW-0472">Membrane</keyword>
<keyword id="KW-0539">Nucleus</keyword>
<keyword id="KW-0597">Phosphoprotein</keyword>
<keyword id="KW-1185">Reference proteome</keyword>
<keyword id="KW-0727">SH2 domain</keyword>
<keyword id="KW-0729">SH3-binding</keyword>
<dbReference type="EC" id="3.1.3.86" evidence="9"/>
<dbReference type="EMBL" id="GU391030">
    <property type="protein sequence ID" value="ADG23056.1"/>
    <property type="molecule type" value="mRNA"/>
</dbReference>
<dbReference type="EMBL" id="AEMK02000070">
    <property type="status" value="NOT_ANNOTATED_CDS"/>
    <property type="molecule type" value="Genomic_DNA"/>
</dbReference>
<dbReference type="RefSeq" id="NP_001177208.1">
    <property type="nucleotide sequence ID" value="NM_001190279.1"/>
</dbReference>
<dbReference type="SMR" id="D7PF45"/>
<dbReference type="FunCoup" id="D7PF45">
    <property type="interactions" value="2020"/>
</dbReference>
<dbReference type="STRING" id="9823.ENSSSCP00000015729"/>
<dbReference type="SwissLipids" id="SLP:000000861"/>
<dbReference type="GlyGen" id="D7PF45">
    <property type="glycosylation" value="1 site"/>
</dbReference>
<dbReference type="PaxDb" id="9823-ENSSSCP00000015729"/>
<dbReference type="GeneID" id="100462718"/>
<dbReference type="KEGG" id="ssc:100462718"/>
<dbReference type="CTD" id="3636"/>
<dbReference type="eggNOG" id="KOG0565">
    <property type="taxonomic scope" value="Eukaryota"/>
</dbReference>
<dbReference type="eggNOG" id="KOG4384">
    <property type="taxonomic scope" value="Eukaryota"/>
</dbReference>
<dbReference type="HOGENOM" id="CLU_007493_1_1_1"/>
<dbReference type="InParanoid" id="D7PF45"/>
<dbReference type="OMA" id="TERMGTR"/>
<dbReference type="OrthoDB" id="7862313at2759"/>
<dbReference type="TreeFam" id="TF323475"/>
<dbReference type="Proteomes" id="UP000008227">
    <property type="component" value="Unplaced"/>
</dbReference>
<dbReference type="Proteomes" id="UP000314985">
    <property type="component" value="Unplaced"/>
</dbReference>
<dbReference type="Proteomes" id="UP000694570">
    <property type="component" value="Unplaced"/>
</dbReference>
<dbReference type="Proteomes" id="UP000694571">
    <property type="component" value="Unplaced"/>
</dbReference>
<dbReference type="Proteomes" id="UP000694720">
    <property type="component" value="Unplaced"/>
</dbReference>
<dbReference type="Proteomes" id="UP000694722">
    <property type="component" value="Unplaced"/>
</dbReference>
<dbReference type="Proteomes" id="UP000694723">
    <property type="component" value="Unplaced"/>
</dbReference>
<dbReference type="Proteomes" id="UP000694724">
    <property type="component" value="Unplaced"/>
</dbReference>
<dbReference type="Proteomes" id="UP000694725">
    <property type="component" value="Unplaced"/>
</dbReference>
<dbReference type="Proteomes" id="UP000694726">
    <property type="component" value="Unplaced"/>
</dbReference>
<dbReference type="Proteomes" id="UP000694727">
    <property type="component" value="Unplaced"/>
</dbReference>
<dbReference type="Proteomes" id="UP000694728">
    <property type="component" value="Unplaced"/>
</dbReference>
<dbReference type="GO" id="GO:0009925">
    <property type="term" value="C:basal plasma membrane"/>
    <property type="evidence" value="ECO:0000250"/>
    <property type="project" value="UniProtKB"/>
</dbReference>
<dbReference type="GO" id="GO:0005829">
    <property type="term" value="C:cytosol"/>
    <property type="evidence" value="ECO:0000318"/>
    <property type="project" value="GO_Central"/>
</dbReference>
<dbReference type="GO" id="GO:0030175">
    <property type="term" value="C:filopodium"/>
    <property type="evidence" value="ECO:0007669"/>
    <property type="project" value="UniProtKB-SubCell"/>
</dbReference>
<dbReference type="GO" id="GO:0030027">
    <property type="term" value="C:lamellipodium"/>
    <property type="evidence" value="ECO:0007669"/>
    <property type="project" value="UniProtKB-SubCell"/>
</dbReference>
<dbReference type="GO" id="GO:0016607">
    <property type="term" value="C:nuclear speck"/>
    <property type="evidence" value="ECO:0000314"/>
    <property type="project" value="UniProtKB"/>
</dbReference>
<dbReference type="GO" id="GO:0005634">
    <property type="term" value="C:nucleus"/>
    <property type="evidence" value="ECO:0000314"/>
    <property type="project" value="UniProtKB"/>
</dbReference>
<dbReference type="GO" id="GO:0000922">
    <property type="term" value="C:spindle pole"/>
    <property type="evidence" value="ECO:0000250"/>
    <property type="project" value="UniProtKB"/>
</dbReference>
<dbReference type="GO" id="GO:0004445">
    <property type="term" value="F:inositol-polyphosphate 5-phosphatase activity"/>
    <property type="evidence" value="ECO:0000318"/>
    <property type="project" value="GO_Central"/>
</dbReference>
<dbReference type="GO" id="GO:0034485">
    <property type="term" value="F:phosphatidylinositol-3,4,5-trisphosphate 5-phosphatase activity"/>
    <property type="evidence" value="ECO:0007669"/>
    <property type="project" value="UniProtKB-EC"/>
</dbReference>
<dbReference type="GO" id="GO:0017124">
    <property type="term" value="F:SH3 domain binding"/>
    <property type="evidence" value="ECO:0007669"/>
    <property type="project" value="UniProtKB-KW"/>
</dbReference>
<dbReference type="GO" id="GO:0000132">
    <property type="term" value="P:establishment of mitotic spindle orientation"/>
    <property type="evidence" value="ECO:0000250"/>
    <property type="project" value="UniProtKB"/>
</dbReference>
<dbReference type="GO" id="GO:0002376">
    <property type="term" value="P:immune system process"/>
    <property type="evidence" value="ECO:0007669"/>
    <property type="project" value="UniProtKB-KW"/>
</dbReference>
<dbReference type="GO" id="GO:0043569">
    <property type="term" value="P:negative regulation of insulin-like growth factor receptor signaling pathway"/>
    <property type="evidence" value="ECO:0000318"/>
    <property type="project" value="GO_Central"/>
</dbReference>
<dbReference type="GO" id="GO:0046856">
    <property type="term" value="P:phosphatidylinositol dephosphorylation"/>
    <property type="evidence" value="ECO:0007669"/>
    <property type="project" value="InterPro"/>
</dbReference>
<dbReference type="GO" id="GO:0110053">
    <property type="term" value="P:regulation of actin filament organization"/>
    <property type="evidence" value="ECO:0000250"/>
    <property type="project" value="UniProtKB"/>
</dbReference>
<dbReference type="GO" id="GO:0050776">
    <property type="term" value="P:regulation of immune response"/>
    <property type="evidence" value="ECO:0000318"/>
    <property type="project" value="GO_Central"/>
</dbReference>
<dbReference type="GO" id="GO:0032880">
    <property type="term" value="P:regulation of protein localization"/>
    <property type="evidence" value="ECO:0000250"/>
    <property type="project" value="UniProtKB"/>
</dbReference>
<dbReference type="CDD" id="cd09101">
    <property type="entry name" value="INPP5c_SHIP2-INPPL1"/>
    <property type="match status" value="1"/>
</dbReference>
<dbReference type="CDD" id="cd09491">
    <property type="entry name" value="SAM_Ship2"/>
    <property type="match status" value="1"/>
</dbReference>
<dbReference type="CDD" id="cd10343">
    <property type="entry name" value="SH2_SHIP"/>
    <property type="match status" value="1"/>
</dbReference>
<dbReference type="FunFam" id="3.30.505.10:FF:000035">
    <property type="entry name" value="phosphatidylinositol 3,4,5-trisphosphate 5-phosphatase 1"/>
    <property type="match status" value="1"/>
</dbReference>
<dbReference type="FunFam" id="3.60.10.10:FF:000005">
    <property type="entry name" value="phosphatidylinositol 3,4,5-trisphosphate 5-phosphatase 1"/>
    <property type="match status" value="1"/>
</dbReference>
<dbReference type="FunFam" id="1.10.150.50:FF:000049">
    <property type="entry name" value="phosphatidylinositol 3,4,5-trisphosphate 5-phosphatase 2"/>
    <property type="match status" value="1"/>
</dbReference>
<dbReference type="Gene3D" id="3.60.10.10">
    <property type="entry name" value="Endonuclease/exonuclease/phosphatase"/>
    <property type="match status" value="1"/>
</dbReference>
<dbReference type="Gene3D" id="3.30.505.10">
    <property type="entry name" value="SH2 domain"/>
    <property type="match status" value="1"/>
</dbReference>
<dbReference type="Gene3D" id="1.10.150.50">
    <property type="entry name" value="Transcription Factor, Ets-1"/>
    <property type="match status" value="1"/>
</dbReference>
<dbReference type="InterPro" id="IPR036691">
    <property type="entry name" value="Endo/exonu/phosph_ase_sf"/>
</dbReference>
<dbReference type="InterPro" id="IPR000300">
    <property type="entry name" value="IPPc"/>
</dbReference>
<dbReference type="InterPro" id="IPR001660">
    <property type="entry name" value="SAM"/>
</dbReference>
<dbReference type="InterPro" id="IPR013761">
    <property type="entry name" value="SAM/pointed_sf"/>
</dbReference>
<dbReference type="InterPro" id="IPR000980">
    <property type="entry name" value="SH2"/>
</dbReference>
<dbReference type="InterPro" id="IPR036860">
    <property type="entry name" value="SH2_dom_sf"/>
</dbReference>
<dbReference type="PANTHER" id="PTHR46051:SF2">
    <property type="entry name" value="PHOSPHATIDYLINOSITOL 3,4,5-TRISPHOSPHATE 5-PHOSPHATASE 2"/>
    <property type="match status" value="1"/>
</dbReference>
<dbReference type="PANTHER" id="PTHR46051">
    <property type="entry name" value="SH2 DOMAIN-CONTAINING PROTEIN"/>
    <property type="match status" value="1"/>
</dbReference>
<dbReference type="Pfam" id="PF24147">
    <property type="entry name" value="C2_SHIP1-2_2nd"/>
    <property type="match status" value="1"/>
</dbReference>
<dbReference type="Pfam" id="PF24150">
    <property type="entry name" value="C2_SHIP1-2_first"/>
    <property type="match status" value="1"/>
</dbReference>
<dbReference type="Pfam" id="PF22669">
    <property type="entry name" value="Exo_endo_phos2"/>
    <property type="match status" value="1"/>
</dbReference>
<dbReference type="Pfam" id="PF00536">
    <property type="entry name" value="SAM_1"/>
    <property type="match status" value="1"/>
</dbReference>
<dbReference type="Pfam" id="PF00017">
    <property type="entry name" value="SH2"/>
    <property type="match status" value="1"/>
</dbReference>
<dbReference type="PRINTS" id="PR00401">
    <property type="entry name" value="SH2DOMAIN"/>
</dbReference>
<dbReference type="SMART" id="SM00128">
    <property type="entry name" value="IPPc"/>
    <property type="match status" value="1"/>
</dbReference>
<dbReference type="SMART" id="SM00454">
    <property type="entry name" value="SAM"/>
    <property type="match status" value="1"/>
</dbReference>
<dbReference type="SMART" id="SM00252">
    <property type="entry name" value="SH2"/>
    <property type="match status" value="1"/>
</dbReference>
<dbReference type="SUPFAM" id="SSF56219">
    <property type="entry name" value="DNase I-like"/>
    <property type="match status" value="1"/>
</dbReference>
<dbReference type="SUPFAM" id="SSF47769">
    <property type="entry name" value="SAM/Pointed domain"/>
    <property type="match status" value="1"/>
</dbReference>
<dbReference type="SUPFAM" id="SSF55550">
    <property type="entry name" value="SH2 domain"/>
    <property type="match status" value="1"/>
</dbReference>
<dbReference type="PROSITE" id="PS50105">
    <property type="entry name" value="SAM_DOMAIN"/>
    <property type="match status" value="1"/>
</dbReference>
<dbReference type="PROSITE" id="PS50001">
    <property type="entry name" value="SH2"/>
    <property type="match status" value="1"/>
</dbReference>
<sequence length="1260" mass="138538">MASACGAPGPGAGPGAALGSPAPAWYHRDLSRAAAEELLARAGRDGSFLVRDSESVAGAFALCVLYQKHVHTYRILPDGEDFLAVQTSQGVPVRRFQTLGELIGLYAQPNQGLVCALLLPVERERELDPPDERDASDGEDEKPPLPPRSGTSVSAPLGPSSPPAAPEPPTPAVESAPNGLSTVSHEYLKGSYGLDLEAVRGGASNLPHLTRTLAASCRRLHSEVDKVLSGLEILSKVFDQQSSPMVTRLLQQQNPPQTGEQELESLVLKLSVLKDFLSGIQKKALKALQDMSSTAPPAPVQPSTRKAKTIPVQAFEVKLDVTLGDLTKIGKSQKFTLSVDVEGGRLVLLRRQRDSQEDWTTFTHDRIRQLIKSQRVQNKLGVVFEKEKERTQRKDFIFVSARKREAFCQLLQLMKNKHSKQDEPDMISVFIGTWNMGSVPPPRNVTSWFTSKGLGKTLDEVTVTIPHDIYVFGTQENSVGDREWLDLLRGGLKELTDLDYRPIAMQSLWNIKVAVLVKPEHENRISHVSTSSVKTGIANTLGNKGAVGVSFMFNGTSFGFVNCHLTSGNEKTARRNQNYLDILRLLSLGDRQLGAFDISLRFTHLFWFGDLNYRLDMDIQEILNYISRKEFEPLLRVDQLNLEREKHKVFLRFSEEEISFPPTYRYERGSRDTYAWHKQKPTGVRTNVPSWCDRILWKSHPETHIICNSYGCTDDIVTSDHSPVFGTFEVGVTSQFISKKGLSKTADQAYIEFESIEAIVKTASRTKFFIEFYSTCLEEYKKSFENDAQSSDNVNFLKVQWSSRQLPTLKPILDIEYLQDQHLLLTVKSMDGYESYGECVVALKSMIGSTAQQFLTFLSHRGEETGNIRGSMKVRVPTERLGTRERLYEWISIDKDEAGAKSKAPSVSRGSQEPRSGSRKPAPAEASCPLSKLFEEPEKPPPTGRPPAPPRAAPREEPLTPRLKPEGAPEPEGVAAPPPKNSFNNPAYYVLEGVPHQLLPPEPPSPARAPVPPATKNKVAITVPAPQLGRHRPPRVGEGSSSDEESGGTLPPPDFPPPPLPDSAIFLPPSREPLPGPGVRGRSGGEARALPPPKAHPRPPLPPGPLPPGTFLGEAAGGDDRSCSVLQVAKKLSEVDSAPPGPGRCLLLPGPLELQPARALPSDYGRPLSFPPPRIRESVQEDLAEEAPCPQAGRTGGLGEAGMGAWLRAIGLERYEEGLVHNGWDDLEFLSDITEEDLEEAGVQDPAHKRLLLDTLQLSK</sequence>
<organism>
    <name type="scientific">Sus scrofa</name>
    <name type="common">Pig</name>
    <dbReference type="NCBI Taxonomy" id="9823"/>
    <lineage>
        <taxon>Eukaryota</taxon>
        <taxon>Metazoa</taxon>
        <taxon>Chordata</taxon>
        <taxon>Craniata</taxon>
        <taxon>Vertebrata</taxon>
        <taxon>Euteleostomi</taxon>
        <taxon>Mammalia</taxon>
        <taxon>Eutheria</taxon>
        <taxon>Laurasiatheria</taxon>
        <taxon>Artiodactyla</taxon>
        <taxon>Suina</taxon>
        <taxon>Suidae</taxon>
        <taxon>Sus</taxon>
    </lineage>
</organism>
<evidence type="ECO:0000250" key="1">
    <source>
        <dbReference type="UniProtKB" id="F1PNY0"/>
    </source>
</evidence>
<evidence type="ECO:0000250" key="2">
    <source>
        <dbReference type="UniProtKB" id="O15357"/>
    </source>
</evidence>
<evidence type="ECO:0000250" key="3">
    <source>
        <dbReference type="UniProtKB" id="Q6P549"/>
    </source>
</evidence>
<evidence type="ECO:0000250" key="4">
    <source>
        <dbReference type="UniProtKB" id="Q9ES52"/>
    </source>
</evidence>
<evidence type="ECO:0000250" key="5">
    <source>
        <dbReference type="UniProtKB" id="Q9WVR3"/>
    </source>
</evidence>
<evidence type="ECO:0000255" key="6">
    <source>
        <dbReference type="PROSITE-ProRule" id="PRU00184"/>
    </source>
</evidence>
<evidence type="ECO:0000255" key="7">
    <source>
        <dbReference type="PROSITE-ProRule" id="PRU00191"/>
    </source>
</evidence>
<evidence type="ECO:0000256" key="8">
    <source>
        <dbReference type="SAM" id="MobiDB-lite"/>
    </source>
</evidence>
<evidence type="ECO:0000269" key="9">
    <source>
    </source>
</evidence>
<evidence type="ECO:0000269" key="10">
    <source>
    </source>
</evidence>
<evidence type="ECO:0000305" key="11"/>
<evidence type="ECO:0000305" key="12">
    <source>
    </source>
</evidence>
<comment type="function">
    <text evidence="1 2 3 5 9">Phosphatidylinositol (PtdIns) phosphatase that specifically hydrolyzes the 5-phosphate of phosphatidylinositol-3,4,5-trisphosphate (PtdIns(3,4,5)P3) to produce PtdIns(3,4)P2, thereby negatively regulating the PI3K (phosphoinositide 3-kinase) pathways (PubMed:12847108). Required for correct mitotic spindle orientation and therefore progression of mitosis (By similarity). Plays a central role in regulation of PI3K-dependent insulin signaling, although the precise molecular mechanisms and signaling pathways remain unclear (By similarity). While overexpression reduces both insulin-stimulated MAP kinase and Akt activation, its absence does not affect insulin signaling or GLUT4 trafficking (By similarity). Confers resistance to dietary obesity (By similarity). May act by regulating AKT2, but not AKT1, phosphorylation at the plasma membrane (By similarity). Part of a signaling pathway that regulates actin cytoskeleton remodeling (By similarity). Required for the maintenance and dynamic remodeling of actin structures as well as in endocytosis, having a major impact on ligand-induced EGFR internalization and degradation (By similarity). Participates in regulation of cortical and submembraneous actin by hydrolyzing PtdIns(3,4,5)P3 thereby regulating membrane ruffling (By similarity). Regulates cell adhesion and cell spreading (By similarity). Required for HGF-mediated lamellipodium formation, cell scattering and spreading (By similarity). Acts as a negative regulator of EPHA2 receptor endocytosis by inhibiting via PI3K-dependent Rac1 activation (By similarity). Acts as a regulator of neuritogenesis by regulating PtdIns(3,4,5)P3 level and is required to form an initial protrusive pattern, and later, maintain proper neurite outgrowth (By similarity). Acts as a negative regulator of the FC-gamma-RIIA receptor (FCGR2A) (By similarity). Mediates signaling from the FC-gamma-RIIB receptor (FCGR2B), playing a central role in terminating signal transduction from activating immune/hematopoietic cell receptor systems (By similarity). Involved in EGF signaling pathway (By similarity). Upon stimulation by EGF, it is recruited by EGFR and dephosphorylates PtdIns(3,4,5)P3 (By similarity). Plays a negative role in regulating the PI3K-PKB pathway, possibly by inhibiting PKB activity (By similarity). Down-regulates Fc-gamma-R-mediated phagocytosis in macrophages independently of INPP5D/SHIP1 (By similarity). In macrophages, down-regulates NF-kappa-B-dependent gene transcription by regulating macrophage colony-stimulating factor (M-CSF)-induced signaling (By similarity). Plays a role in the localization of AURKA and NEDD9/HEF1 to the basolateral membrane at interphase in polarized cysts, thereby mediates cell cycle homeostasis, cell polarization and cilia assembly (By similarity). Additionally promotion of cilia growth is also facilitated by hydrolysis of (PtdIns(3,4,5)P3) to PtdIns(3,4)P2 (By similarity). Promotes formation of apical membrane-initiation sites during the initial stages of lumen formation via Rho family-induced actin filament organization and CTNNB1 localization to cell-cell contacts (By similarity). May also hydrolyze PtdIns(1,3,4,5)P4, and could thus affect the levels of the higher inositol polyphosphates like InsP6. Involved in endochondral ossification (By similarity).</text>
</comment>
<comment type="catalytic activity">
    <reaction evidence="9">
        <text>a 1,2-diacyl-sn-glycero-3-phospho-(1D-myo-inositol-3,4,5-trisphosphate) + H2O = a 1,2-diacyl-sn-glycero-3-phospho-(1D-myo-inositol-3,4-bisphosphate) + phosphate</text>
        <dbReference type="Rhea" id="RHEA:25528"/>
        <dbReference type="ChEBI" id="CHEBI:15377"/>
        <dbReference type="ChEBI" id="CHEBI:43474"/>
        <dbReference type="ChEBI" id="CHEBI:57658"/>
        <dbReference type="ChEBI" id="CHEBI:57836"/>
        <dbReference type="EC" id="3.1.3.86"/>
    </reaction>
    <physiologicalReaction direction="left-to-right" evidence="12">
        <dbReference type="Rhea" id="RHEA:25529"/>
    </physiologicalReaction>
</comment>
<comment type="catalytic activity">
    <reaction evidence="2">
        <text>1,2-dioctanoyl-sn-glycero-3-phospho-(1D-myo-inositol-3,4,5-trisphosphate) + H2O = 1,2-dioctanoyl-sn-glycero-3-phospho-(1D-myo-inositol-3,4-bisphosphate) + phosphate</text>
        <dbReference type="Rhea" id="RHEA:43548"/>
        <dbReference type="ChEBI" id="CHEBI:15377"/>
        <dbReference type="ChEBI" id="CHEBI:43474"/>
        <dbReference type="ChEBI" id="CHEBI:83416"/>
        <dbReference type="ChEBI" id="CHEBI:83417"/>
    </reaction>
    <physiologicalReaction direction="left-to-right" evidence="2">
        <dbReference type="Rhea" id="RHEA:43549"/>
    </physiologicalReaction>
</comment>
<comment type="catalytic activity">
    <reaction evidence="2">
        <text>1,2-dihexadecanoyl-sn-glycero-3-phospho-(1D-myo-inositol-3,4,5-trisphosphate) + H2O = 1,2-dihexadecanoyl-sn-glycero-3-phospho-(1D-myo-inositol-3,4-bisphosphate) + phosphate</text>
        <dbReference type="Rhea" id="RHEA:43556"/>
        <dbReference type="ChEBI" id="CHEBI:15377"/>
        <dbReference type="ChEBI" id="CHEBI:43474"/>
        <dbReference type="ChEBI" id="CHEBI:83420"/>
        <dbReference type="ChEBI" id="CHEBI:83422"/>
    </reaction>
    <physiologicalReaction direction="left-to-right" evidence="2">
        <dbReference type="Rhea" id="RHEA:43557"/>
    </physiologicalReaction>
</comment>
<comment type="activity regulation">
    <text evidence="2">Activated upon translocation to the sites of synthesis of PtdIns(3,4,5)P3 in the membrane. Enzymatic activity is enhanced in the presence of phosphatidylserine.</text>
</comment>
<comment type="subunit">
    <text evidence="1 2 3">Interacts with tyrosine phosphorylated form of SHC1 (By similarity). Interacts with EGFR (By similarity). Upon stimulation by the EGF signaling pathway, it forms a complex with SHC1 and EGFR (By similarity). Interacts with cytoskeletal protein SORBS3/vinexin, promoting its localization to the periphery of cells (By similarity). Forms a complex with filamin (FLNA or FLNB), actin, GPIb (GP1BA or GP1BB) that regulates cortical and submembraneous actin (By similarity). Interacts with c-Met/MET, when c-Met/MET is phosphorylated on 'Tyr-1356' (By similarity). Interacts with p130Cas/BCAR1 (By similarity). Interacts with CENTD3/ARAP3 via its SAM domain (By similarity). Interacts with c-Cbl/CBL and CAP/SORBS1 (By similarity). Interacts with activated EPHA2 receptor (By similarity). Interacts with receptor FCGR2A (By similarity). Interacts with receptor FCGR2B (By similarity). Interacts with tyrosine kinase ABL1 (By similarity). Interacts with tyrosine kinase TEC (By similarity). Interacts with CSF1R (By similarity). Interacts (via N-terminus) with SH3YL1 (via SH3 domain). Interacts with FCRL6 (tyrosine phosphorylated form) (By similarity). Interacts (via SH2 domain) with tyrosine phosphorylated KLRC1 (via ITIM) (By similarity). Interacts with NEDD9/HEF1 (By similarity).</text>
</comment>
<comment type="subcellular location">
    <subcellularLocation>
        <location evidence="2">Cytoplasm</location>
        <location evidence="2">Cytosol</location>
    </subcellularLocation>
    <subcellularLocation>
        <location>Cytoplasm</location>
        <location>Cytoskeleton</location>
    </subcellularLocation>
    <subcellularLocation>
        <location evidence="2">Membrane</location>
        <topology>Peripheral membrane protein</topology>
    </subcellularLocation>
    <subcellularLocation>
        <location evidence="2">Cell projection</location>
        <location evidence="2">Filopodium</location>
    </subcellularLocation>
    <subcellularLocation>
        <location evidence="2">Cell projection</location>
        <location evidence="2">Lamellipodium</location>
    </subcellularLocation>
    <subcellularLocation>
        <location evidence="1">Basal cell membrane</location>
    </subcellularLocation>
    <subcellularLocation>
        <location evidence="9">Nucleus</location>
    </subcellularLocation>
    <subcellularLocation>
        <location evidence="9">Nucleus speckle</location>
    </subcellularLocation>
    <subcellularLocation>
        <location evidence="1">Cytoplasm</location>
        <location evidence="1">Cytoskeleton</location>
        <location evidence="1">Spindle pole</location>
    </subcellularLocation>
    <text evidence="2">Translocates to membrane ruffles when activated, translocation is probably due to different mechanisms depending on the stimulus and cell type. Partly translocated via its SH2 domain which mediates interaction with tyrosine phosphorylated receptors such as the FC-gamma-RIIB receptor (FCGR2B). Tyrosine phosphorylation may also participate in membrane localization. Insulin specifically stimulates its redistribution from the cytosol to the plasma membrane. Recruited to the membrane following M-CSF stimulation. In activated spreading platelets, localizes with actin at filopodia, lamellipodia and the central actin ring.</text>
</comment>
<comment type="tissue specificity">
    <text evidence="10">Expressed abundantly in skeletal muscle tissue.</text>
</comment>
<comment type="domain">
    <text evidence="2">The SH2 domain interacts with tyrosine phosphorylated forms of proteins such as SHC1 or FCGR2A (By similarity). It also mediates the interaction with p130Cas/BCAR1 (By similarity).</text>
</comment>
<comment type="domain">
    <text evidence="4">The NPXY sequence motif found in many tyrosine-phosphorylated proteins is required for the specific binding of the PID domain.</text>
</comment>
<comment type="PTM">
    <text evidence="2">Tyrosine phosphorylated by the members of the SRC family after exposure to a diverse array of extracellular stimuli such as insulin, growth factors such as EGF or PDGF, chemokines, integrin ligands and hypertonic and oxidative stress. May be phosphorylated upon IgG receptor FCGR2B-binding. Phosphorylated at Tyr-988 following cell attachment and spreading. Phosphorylated at Tyr-1164 following EGF signaling pathway stimulation.</text>
</comment>
<comment type="similarity">
    <text evidence="11">Belongs to the inositol 1,4,5-trisphosphate 5-phosphatase family.</text>
</comment>
<gene>
    <name evidence="3" type="primary">INPPL1</name>
    <name evidence="3" type="synonym">SHIP2</name>
</gene>
<proteinExistence type="evidence at protein level"/>
<protein>
    <recommendedName>
        <fullName evidence="11">Phosphatidylinositol 3,4,5-trisphosphate 5-phosphatase 2</fullName>
        <ecNumber evidence="9">3.1.3.86</ecNumber>
    </recommendedName>
    <alternativeName>
        <fullName evidence="2">Inositol polyphosphate phosphatase-like protein 1</fullName>
        <shortName evidence="2">INPPL-1</shortName>
    </alternativeName>
    <alternativeName>
        <fullName evidence="2">Protein 51C</fullName>
    </alternativeName>
    <alternativeName>
        <fullName evidence="2">SH2 domain-containing inositol 5'-phosphatase 2</fullName>
        <shortName evidence="2">SH2 domain-containing inositol phosphatase 2</shortName>
        <shortName evidence="2">SHIP-2</shortName>
    </alternativeName>
</protein>